<feature type="chain" id="PRO_0000425414" description="NAD(P)H-dependent pentose reductase">
    <location>
        <begin position="1"/>
        <end position="328"/>
    </location>
</feature>
<feature type="active site" description="Proton donor" evidence="1">
    <location>
        <position position="50"/>
    </location>
</feature>
<feature type="binding site" evidence="1">
    <location>
        <position position="112"/>
    </location>
    <ligand>
        <name>substrate</name>
    </ligand>
</feature>
<feature type="binding site" evidence="1">
    <location>
        <begin position="174"/>
        <end position="175"/>
    </location>
    <ligand>
        <name>NAD(+)</name>
        <dbReference type="ChEBI" id="CHEBI:57540"/>
    </ligand>
</feature>
<feature type="binding site" evidence="1">
    <location>
        <begin position="223"/>
        <end position="232"/>
    </location>
    <ligand>
        <name>NAD(+)</name>
        <dbReference type="ChEBI" id="CHEBI:57540"/>
    </ligand>
</feature>
<feature type="binding site" evidence="1">
    <location>
        <begin position="279"/>
        <end position="289"/>
    </location>
    <ligand>
        <name>NAD(+)</name>
        <dbReference type="ChEBI" id="CHEBI:57540"/>
    </ligand>
</feature>
<feature type="site" description="Lowers pKa of active site Tyr" evidence="1">
    <location>
        <position position="79"/>
    </location>
</feature>
<comment type="function">
    <text evidence="2">Pentose reductase with a broad substrate affinity involved in pentose catabolism. Has highest reductase activities with L-arabinose and D-xylose as substrates, and displays much lower activities with D-ribose, D-galactose and D-glucose. Has highest dehydrogenase activity with L-arabitol as substrate, followed by xylitol and D-sorbitol. May be responsible for the first step of the L-arabinose catabolic pathway.</text>
</comment>
<comment type="biophysicochemical properties">
    <kinetics>
        <KM evidence="2">19.7 mM for L-arabinose</KM>
        <KM evidence="2">19.9 mM for D-xylose</KM>
        <Vmax evidence="2">0.36 umol/min/mg enzyme for L-arabinose</Vmax>
        <Vmax evidence="2">0.244 umol/min/mg enzyme for D-xylose</Vmax>
    </kinetics>
</comment>
<comment type="induction">
    <text evidence="2">Overexpressed during growth on both D-xylose or L-arabinose compared to D-glucose. Significantly expressed during late stages of infection of barley leaves.</text>
</comment>
<comment type="similarity">
    <text evidence="3">Belongs to the aldo/keto reductase family.</text>
</comment>
<evidence type="ECO:0000250" key="1"/>
<evidence type="ECO:0000269" key="2">
    <source>
    </source>
</evidence>
<evidence type="ECO:0000305" key="3"/>
<reference key="1">
    <citation type="journal article" date="2013" name="FEBS Lett.">
        <title>The pentose catabolic pathway of the rice-blast fungus Magnaporthe oryzae involves a novel pentose reductase restricted to few fungal species.</title>
        <authorList>
            <person name="Klaubauf S."/>
            <person name="Ribot C."/>
            <person name="Melayah D."/>
            <person name="Lagorce A."/>
            <person name="Lebrun M.H."/>
            <person name="de Vries R.P."/>
        </authorList>
    </citation>
    <scope>NUCLEOTIDE SEQUENCE [MRNA]</scope>
    <scope>FUNCTION</scope>
    <scope>BIOPHYSICOCHEMICAL PROPERTIES</scope>
    <scope>INDUCTION</scope>
    <source>
        <strain>P1.2</strain>
    </source>
</reference>
<reference key="2">
    <citation type="journal article" date="2005" name="Nature">
        <title>The genome sequence of the rice blast fungus Magnaporthe grisea.</title>
        <authorList>
            <person name="Dean R.A."/>
            <person name="Talbot N.J."/>
            <person name="Ebbole D.J."/>
            <person name="Farman M.L."/>
            <person name="Mitchell T.K."/>
            <person name="Orbach M.J."/>
            <person name="Thon M.R."/>
            <person name="Kulkarni R."/>
            <person name="Xu J.-R."/>
            <person name="Pan H."/>
            <person name="Read N.D."/>
            <person name="Lee Y.-H."/>
            <person name="Carbone I."/>
            <person name="Brown D."/>
            <person name="Oh Y.Y."/>
            <person name="Donofrio N."/>
            <person name="Jeong J.S."/>
            <person name="Soanes D.M."/>
            <person name="Djonovic S."/>
            <person name="Kolomiets E."/>
            <person name="Rehmeyer C."/>
            <person name="Li W."/>
            <person name="Harding M."/>
            <person name="Kim S."/>
            <person name="Lebrun M.-H."/>
            <person name="Bohnert H."/>
            <person name="Coughlan S."/>
            <person name="Butler J."/>
            <person name="Calvo S.E."/>
            <person name="Ma L.-J."/>
            <person name="Nicol R."/>
            <person name="Purcell S."/>
            <person name="Nusbaum C."/>
            <person name="Galagan J.E."/>
            <person name="Birren B.W."/>
        </authorList>
    </citation>
    <scope>NUCLEOTIDE SEQUENCE [LARGE SCALE GENOMIC DNA]</scope>
    <source>
        <strain>70-15 / ATCC MYA-4617 / FGSC 8958</strain>
    </source>
</reference>
<proteinExistence type="evidence at protein level"/>
<keyword id="KW-0119">Carbohydrate metabolism</keyword>
<keyword id="KW-0520">NAD</keyword>
<keyword id="KW-0521">NADP</keyword>
<keyword id="KW-0560">Oxidoreductase</keyword>
<keyword id="KW-1185">Reference proteome</keyword>
<accession>G4MZI3</accession>
<accession>Q3MSM6</accession>
<dbReference type="EC" id="1.1.1.-"/>
<dbReference type="EMBL" id="AJ890448">
    <property type="protein sequence ID" value="CAI67592.1"/>
    <property type="molecule type" value="mRNA"/>
</dbReference>
<dbReference type="EMBL" id="CM001232">
    <property type="protein sequence ID" value="EHA54542.1"/>
    <property type="molecule type" value="Genomic_DNA"/>
</dbReference>
<dbReference type="RefSeq" id="XP_003714349.1">
    <property type="nucleotide sequence ID" value="XM_003714301.1"/>
</dbReference>
<dbReference type="SMR" id="G4MZI3"/>
<dbReference type="STRING" id="242507.G4MZI3"/>
<dbReference type="EnsemblFungi" id="MGG_01404T0">
    <property type="protein sequence ID" value="MGG_01404T0"/>
    <property type="gene ID" value="MGG_01404"/>
</dbReference>
<dbReference type="GeneID" id="2679231"/>
<dbReference type="KEGG" id="mgr:MGG_01404"/>
<dbReference type="VEuPathDB" id="FungiDB:MGG_01404"/>
<dbReference type="eggNOG" id="KOG1577">
    <property type="taxonomic scope" value="Eukaryota"/>
</dbReference>
<dbReference type="HOGENOM" id="CLU_023205_0_0_1"/>
<dbReference type="InParanoid" id="G4MZI3"/>
<dbReference type="OMA" id="WNNYHAK"/>
<dbReference type="OrthoDB" id="416253at2759"/>
<dbReference type="SABIO-RK" id="G4MZI3"/>
<dbReference type="Proteomes" id="UP000009058">
    <property type="component" value="Chromosome 2"/>
</dbReference>
<dbReference type="GO" id="GO:0004033">
    <property type="term" value="F:aldo-keto reductase (NADPH) activity"/>
    <property type="evidence" value="ECO:0007669"/>
    <property type="project" value="TreeGrafter"/>
</dbReference>
<dbReference type="FunFam" id="3.20.20.100:FF:000007">
    <property type="entry name" value="NAD(P)H-dependent D-xylose reductase xyl1"/>
    <property type="match status" value="1"/>
</dbReference>
<dbReference type="Gene3D" id="3.20.20.100">
    <property type="entry name" value="NADP-dependent oxidoreductase domain"/>
    <property type="match status" value="1"/>
</dbReference>
<dbReference type="InterPro" id="IPR020471">
    <property type="entry name" value="AKR"/>
</dbReference>
<dbReference type="InterPro" id="IPR023210">
    <property type="entry name" value="NADP_OxRdtase_dom"/>
</dbReference>
<dbReference type="InterPro" id="IPR036812">
    <property type="entry name" value="NADP_OxRdtase_dom_sf"/>
</dbReference>
<dbReference type="PANTHER" id="PTHR43827">
    <property type="entry name" value="2,5-DIKETO-D-GLUCONIC ACID REDUCTASE"/>
    <property type="match status" value="1"/>
</dbReference>
<dbReference type="PANTHER" id="PTHR43827:SF3">
    <property type="entry name" value="NADP-DEPENDENT OXIDOREDUCTASE DOMAIN-CONTAINING PROTEIN"/>
    <property type="match status" value="1"/>
</dbReference>
<dbReference type="Pfam" id="PF00248">
    <property type="entry name" value="Aldo_ket_red"/>
    <property type="match status" value="1"/>
</dbReference>
<dbReference type="PIRSF" id="PIRSF000097">
    <property type="entry name" value="AKR"/>
    <property type="match status" value="1"/>
</dbReference>
<dbReference type="PRINTS" id="PR00069">
    <property type="entry name" value="ALDKETRDTASE"/>
</dbReference>
<dbReference type="SUPFAM" id="SSF51430">
    <property type="entry name" value="NAD(P)-linked oxidoreductase"/>
    <property type="match status" value="1"/>
</dbReference>
<organism>
    <name type="scientific">Pyricularia oryzae (strain 70-15 / ATCC MYA-4617 / FGSC 8958)</name>
    <name type="common">Rice blast fungus</name>
    <name type="synonym">Magnaporthe oryzae</name>
    <dbReference type="NCBI Taxonomy" id="242507"/>
    <lineage>
        <taxon>Eukaryota</taxon>
        <taxon>Fungi</taxon>
        <taxon>Dikarya</taxon>
        <taxon>Ascomycota</taxon>
        <taxon>Pezizomycotina</taxon>
        <taxon>Sordariomycetes</taxon>
        <taxon>Sordariomycetidae</taxon>
        <taxon>Magnaporthales</taxon>
        <taxon>Pyriculariaceae</taxon>
        <taxon>Pyricularia</taxon>
    </lineage>
</organism>
<name>PRD1_PYRO7</name>
<sequence length="328" mass="37106">MAKTSIKLNSGYEMPLVGFGIWKVPVDKTAQAVYDAIKLGYRQIDGAYDYTNSKEAGEGVRRAIEEGIVKREDLFITSKLWNNYHKHEHAIEMAKHEVDTWGIGYLDLFLIHFPISLEYISHSKMPYPCFWPDREKSRSTPLQYTPVAETWAALESLVKTDSNPDGILRSIGVANFRAQLLTDLWGSAKIKPAVNQIEHHPYLVQPQLLAFLKDHGIAITAYSSFGPQSFVELDHPRVSKVEPLFTHPTIKAIADKHGRTGAQVLLRWATQRDIVVIPKSNNVDRLKQNLDCVSFDLSDDEVKQISDLDCGVRFNDPADLSPPIYIFD</sequence>
<protein>
    <recommendedName>
        <fullName>NAD(P)H-dependent pentose reductase</fullName>
        <shortName>PRD</shortName>
        <ecNumber>1.1.1.-</ecNumber>
    </recommendedName>
</protein>
<gene>
    <name type="primary">PRD1</name>
    <name type="synonym">ARD1</name>
    <name type="ORF">MGG_01404</name>
</gene>